<organism>
    <name type="scientific">Hydrogenobaculum sp. (strain Y04AAS1)</name>
    <dbReference type="NCBI Taxonomy" id="380749"/>
    <lineage>
        <taxon>Bacteria</taxon>
        <taxon>Pseudomonadati</taxon>
        <taxon>Aquificota</taxon>
        <taxon>Aquificia</taxon>
        <taxon>Aquificales</taxon>
        <taxon>Aquificaceae</taxon>
        <taxon>Hydrogenobaculum</taxon>
    </lineage>
</organism>
<accession>B4U7M7</accession>
<comment type="function">
    <text evidence="1">Binds to the 23S rRNA.</text>
</comment>
<comment type="similarity">
    <text evidence="1">Belongs to the bacterial ribosomal protein bL9 family.</text>
</comment>
<name>RL9_HYDS0</name>
<reference key="1">
    <citation type="journal article" date="2009" name="J. Bacteriol.">
        <title>Complete and draft genome sequences of six members of the Aquificales.</title>
        <authorList>
            <person name="Reysenbach A.-L."/>
            <person name="Hamamura N."/>
            <person name="Podar M."/>
            <person name="Griffiths E."/>
            <person name="Ferreira S."/>
            <person name="Hochstein R."/>
            <person name="Heidelberg J."/>
            <person name="Johnson J."/>
            <person name="Mead D."/>
            <person name="Pohorille A."/>
            <person name="Sarmiento M."/>
            <person name="Schweighofer K."/>
            <person name="Seshadri R."/>
            <person name="Voytek M.A."/>
        </authorList>
    </citation>
    <scope>NUCLEOTIDE SEQUENCE [LARGE SCALE GENOMIC DNA]</scope>
    <source>
        <strain>Y04AAS1</strain>
    </source>
</reference>
<feature type="chain" id="PRO_1000126926" description="Large ribosomal subunit protein bL9">
    <location>
        <begin position="1"/>
        <end position="148"/>
    </location>
</feature>
<sequence length="148" mass="16408">MKVILLEELEGRGSFGDIITVKDGFANNYLIPRKLALPATEGNIKHIQSILSQKARKLEKIRTQAQELAKKLDGAEITIKKPVGQNGKLFGAITTSDIAKALNEKGFNVDKKQIIISSPIKNLGLYTIKVRLHNDIYASIKVNVEEQK</sequence>
<dbReference type="EMBL" id="CP001130">
    <property type="protein sequence ID" value="ACG57138.1"/>
    <property type="molecule type" value="Genomic_DNA"/>
</dbReference>
<dbReference type="RefSeq" id="WP_012513494.1">
    <property type="nucleotide sequence ID" value="NC_011126.1"/>
</dbReference>
<dbReference type="SMR" id="B4U7M7"/>
<dbReference type="STRING" id="380749.HY04AAS1_0448"/>
<dbReference type="KEGG" id="hya:HY04AAS1_0448"/>
<dbReference type="eggNOG" id="COG0359">
    <property type="taxonomic scope" value="Bacteria"/>
</dbReference>
<dbReference type="HOGENOM" id="CLU_078938_3_0_0"/>
<dbReference type="OrthoDB" id="9788336at2"/>
<dbReference type="GO" id="GO:1990904">
    <property type="term" value="C:ribonucleoprotein complex"/>
    <property type="evidence" value="ECO:0007669"/>
    <property type="project" value="UniProtKB-KW"/>
</dbReference>
<dbReference type="GO" id="GO:0005840">
    <property type="term" value="C:ribosome"/>
    <property type="evidence" value="ECO:0007669"/>
    <property type="project" value="UniProtKB-KW"/>
</dbReference>
<dbReference type="GO" id="GO:0019843">
    <property type="term" value="F:rRNA binding"/>
    <property type="evidence" value="ECO:0007669"/>
    <property type="project" value="UniProtKB-UniRule"/>
</dbReference>
<dbReference type="GO" id="GO:0003735">
    <property type="term" value="F:structural constituent of ribosome"/>
    <property type="evidence" value="ECO:0007669"/>
    <property type="project" value="InterPro"/>
</dbReference>
<dbReference type="GO" id="GO:0006412">
    <property type="term" value="P:translation"/>
    <property type="evidence" value="ECO:0007669"/>
    <property type="project" value="UniProtKB-UniRule"/>
</dbReference>
<dbReference type="Gene3D" id="3.10.430.100">
    <property type="entry name" value="Ribosomal protein L9, C-terminal domain"/>
    <property type="match status" value="1"/>
</dbReference>
<dbReference type="Gene3D" id="3.40.5.10">
    <property type="entry name" value="Ribosomal protein L9, N-terminal domain"/>
    <property type="match status" value="1"/>
</dbReference>
<dbReference type="HAMAP" id="MF_00503">
    <property type="entry name" value="Ribosomal_bL9"/>
    <property type="match status" value="1"/>
</dbReference>
<dbReference type="InterPro" id="IPR000244">
    <property type="entry name" value="Ribosomal_bL9"/>
</dbReference>
<dbReference type="InterPro" id="IPR009027">
    <property type="entry name" value="Ribosomal_bL9/RNase_H1_N"/>
</dbReference>
<dbReference type="InterPro" id="IPR020594">
    <property type="entry name" value="Ribosomal_bL9_bac/chp"/>
</dbReference>
<dbReference type="InterPro" id="IPR020069">
    <property type="entry name" value="Ribosomal_bL9_C"/>
</dbReference>
<dbReference type="InterPro" id="IPR036791">
    <property type="entry name" value="Ribosomal_bL9_C_sf"/>
</dbReference>
<dbReference type="InterPro" id="IPR020070">
    <property type="entry name" value="Ribosomal_bL9_N"/>
</dbReference>
<dbReference type="InterPro" id="IPR036935">
    <property type="entry name" value="Ribosomal_bL9_N_sf"/>
</dbReference>
<dbReference type="NCBIfam" id="TIGR00158">
    <property type="entry name" value="L9"/>
    <property type="match status" value="1"/>
</dbReference>
<dbReference type="PANTHER" id="PTHR21368">
    <property type="entry name" value="50S RIBOSOMAL PROTEIN L9"/>
    <property type="match status" value="1"/>
</dbReference>
<dbReference type="Pfam" id="PF03948">
    <property type="entry name" value="Ribosomal_L9_C"/>
    <property type="match status" value="1"/>
</dbReference>
<dbReference type="Pfam" id="PF01281">
    <property type="entry name" value="Ribosomal_L9_N"/>
    <property type="match status" value="1"/>
</dbReference>
<dbReference type="SUPFAM" id="SSF55658">
    <property type="entry name" value="L9 N-domain-like"/>
    <property type="match status" value="1"/>
</dbReference>
<dbReference type="SUPFAM" id="SSF55653">
    <property type="entry name" value="Ribosomal protein L9 C-domain"/>
    <property type="match status" value="1"/>
</dbReference>
<dbReference type="PROSITE" id="PS00651">
    <property type="entry name" value="RIBOSOMAL_L9"/>
    <property type="match status" value="1"/>
</dbReference>
<evidence type="ECO:0000255" key="1">
    <source>
        <dbReference type="HAMAP-Rule" id="MF_00503"/>
    </source>
</evidence>
<evidence type="ECO:0000305" key="2"/>
<gene>
    <name evidence="1" type="primary">rplI</name>
    <name type="ordered locus">HY04AAS1_0448</name>
</gene>
<protein>
    <recommendedName>
        <fullName evidence="1">Large ribosomal subunit protein bL9</fullName>
    </recommendedName>
    <alternativeName>
        <fullName evidence="2">50S ribosomal protein L9</fullName>
    </alternativeName>
</protein>
<keyword id="KW-0687">Ribonucleoprotein</keyword>
<keyword id="KW-0689">Ribosomal protein</keyword>
<keyword id="KW-0694">RNA-binding</keyword>
<keyword id="KW-0699">rRNA-binding</keyword>
<proteinExistence type="inferred from homology"/>